<proteinExistence type="inferred from homology"/>
<name>TUS_SALSV</name>
<protein>
    <recommendedName>
        <fullName evidence="1">DNA replication terminus site-binding protein</fullName>
        <shortName evidence="1">Ter-binding protein</shortName>
    </recommendedName>
</protein>
<comment type="function">
    <text evidence="1">Trans-acting protein required for termination of DNA replication. Binds to DNA replication terminator sequences (terA to terF) to prevent the passage of replication forks. The termination efficiency will be affected by the affinity of this protein for the terminator sequence.</text>
</comment>
<comment type="subcellular location">
    <subcellularLocation>
        <location evidence="1">Cytoplasm</location>
    </subcellularLocation>
</comment>
<comment type="similarity">
    <text evidence="1">Belongs to the Tus family.</text>
</comment>
<keyword id="KW-0963">Cytoplasm</keyword>
<keyword id="KW-0235">DNA replication</keyword>
<keyword id="KW-0238">DNA-binding</keyword>
<sequence length="309" mass="35487">MSRYDLVERLNGTFRQIEQHLAALTDNLQQHSLLIARVFSLPQVTKEAEHAPLDTIEVTQHLGKEAETLALRHYRHLFIQQQSENRSSKAAVRLPGVLCYQVDNATQLDLENQVQRINQLKTTFEQMVTVESGLPSAARFEWVHRHLPGLITLNAYRTLTLINNPATIRFGWANKHIIKNLSRDEVLSQLKKSLASPRSVPPWTREQWQFKLEREYQDIAALPQQARLKIKRPVKVQPIARIWYKGQQKQVQHACPTPIIALINTDNGAGVPDIGGLENYDADNIQHRFKPQAQPLRLIIPRLHLYVAD</sequence>
<dbReference type="EMBL" id="CP001127">
    <property type="protein sequence ID" value="ACF88915.1"/>
    <property type="molecule type" value="Genomic_DNA"/>
</dbReference>
<dbReference type="RefSeq" id="WP_000092497.1">
    <property type="nucleotide sequence ID" value="NC_011094.1"/>
</dbReference>
<dbReference type="SMR" id="B4TVD5"/>
<dbReference type="KEGG" id="sew:SeSA_A1569"/>
<dbReference type="HOGENOM" id="CLU_078181_0_0_6"/>
<dbReference type="Proteomes" id="UP000001865">
    <property type="component" value="Chromosome"/>
</dbReference>
<dbReference type="GO" id="GO:0005737">
    <property type="term" value="C:cytoplasm"/>
    <property type="evidence" value="ECO:0007669"/>
    <property type="project" value="UniProtKB-SubCell"/>
</dbReference>
<dbReference type="GO" id="GO:0003677">
    <property type="term" value="F:DNA binding"/>
    <property type="evidence" value="ECO:0007669"/>
    <property type="project" value="UniProtKB-UniRule"/>
</dbReference>
<dbReference type="GO" id="GO:0006274">
    <property type="term" value="P:DNA replication termination"/>
    <property type="evidence" value="ECO:0007669"/>
    <property type="project" value="UniProtKB-UniRule"/>
</dbReference>
<dbReference type="Gene3D" id="3.30.54.10">
    <property type="match status" value="1"/>
</dbReference>
<dbReference type="Gene3D" id="3.50.14.10">
    <property type="entry name" value="Replication terminator Tus, domain 1 superfamily/Replication terminator Tus"/>
    <property type="match status" value="1"/>
</dbReference>
<dbReference type="HAMAP" id="MF_00483">
    <property type="entry name" value="Rep_term_Tus"/>
    <property type="match status" value="1"/>
</dbReference>
<dbReference type="InterPro" id="IPR008865">
    <property type="entry name" value="DNA_replication_term_site-bd"/>
</dbReference>
<dbReference type="InterPro" id="IPR036381">
    <property type="entry name" value="Tus_dom1"/>
</dbReference>
<dbReference type="InterPro" id="IPR036384">
    <property type="entry name" value="Tus_sf"/>
</dbReference>
<dbReference type="NCBIfam" id="TIGR02648">
    <property type="entry name" value="rep_term_tus"/>
    <property type="match status" value="1"/>
</dbReference>
<dbReference type="Pfam" id="PF05472">
    <property type="entry name" value="Ter"/>
    <property type="match status" value="1"/>
</dbReference>
<dbReference type="SUPFAM" id="SSF56596">
    <property type="entry name" value="Replication terminator protein (Tus)"/>
    <property type="match status" value="1"/>
</dbReference>
<gene>
    <name evidence="1" type="primary">tus</name>
    <name type="ordered locus">SeSA_A1569</name>
</gene>
<accession>B4TVD5</accession>
<organism>
    <name type="scientific">Salmonella schwarzengrund (strain CVM19633)</name>
    <dbReference type="NCBI Taxonomy" id="439843"/>
    <lineage>
        <taxon>Bacteria</taxon>
        <taxon>Pseudomonadati</taxon>
        <taxon>Pseudomonadota</taxon>
        <taxon>Gammaproteobacteria</taxon>
        <taxon>Enterobacterales</taxon>
        <taxon>Enterobacteriaceae</taxon>
        <taxon>Salmonella</taxon>
    </lineage>
</organism>
<feature type="chain" id="PRO_1000126049" description="DNA replication terminus site-binding protein">
    <location>
        <begin position="1"/>
        <end position="309"/>
    </location>
</feature>
<reference key="1">
    <citation type="journal article" date="2011" name="J. Bacteriol.">
        <title>Comparative genomics of 28 Salmonella enterica isolates: evidence for CRISPR-mediated adaptive sublineage evolution.</title>
        <authorList>
            <person name="Fricke W.F."/>
            <person name="Mammel M.K."/>
            <person name="McDermott P.F."/>
            <person name="Tartera C."/>
            <person name="White D.G."/>
            <person name="Leclerc J.E."/>
            <person name="Ravel J."/>
            <person name="Cebula T.A."/>
        </authorList>
    </citation>
    <scope>NUCLEOTIDE SEQUENCE [LARGE SCALE GENOMIC DNA]</scope>
    <source>
        <strain>CVM19633</strain>
    </source>
</reference>
<evidence type="ECO:0000255" key="1">
    <source>
        <dbReference type="HAMAP-Rule" id="MF_00483"/>
    </source>
</evidence>